<evidence type="ECO:0000255" key="1">
    <source>
        <dbReference type="HAMAP-Rule" id="MF_00518"/>
    </source>
</evidence>
<protein>
    <recommendedName>
        <fullName evidence="1">D-aminoacyl-tRNA deacylase</fullName>
        <shortName evidence="1">DTD</shortName>
        <ecNumber evidence="1">3.1.1.96</ecNumber>
    </recommendedName>
    <alternativeName>
        <fullName evidence="1">Gly-tRNA(Ala) deacylase</fullName>
    </alternativeName>
</protein>
<gene>
    <name evidence="1" type="primary">dtd</name>
    <name type="ordered locus">SEQ_2015</name>
</gene>
<proteinExistence type="inferred from homology"/>
<sequence>MKIVIQRVKEASVSIDGKIAGAIDQGLLLLVGIGPDDQAEDIDYAVRKISHMRIFSDPEGKMNRSIQDIEGSVLSISQFTLYADTKKGNRPAFTGAAKPDRASQLYNSFNAQLEQLVPVQRGVFGADMQVSLINDGPVTIILDTKYR</sequence>
<accession>C0M9F6</accession>
<feature type="chain" id="PRO_1000146212" description="D-aminoacyl-tRNA deacylase">
    <location>
        <begin position="1"/>
        <end position="147"/>
    </location>
</feature>
<feature type="short sequence motif" description="Gly-cisPro motif, important for rejection of L-amino acids" evidence="1">
    <location>
        <begin position="136"/>
        <end position="137"/>
    </location>
</feature>
<organism>
    <name type="scientific">Streptococcus equi subsp. equi (strain 4047)</name>
    <dbReference type="NCBI Taxonomy" id="553482"/>
    <lineage>
        <taxon>Bacteria</taxon>
        <taxon>Bacillati</taxon>
        <taxon>Bacillota</taxon>
        <taxon>Bacilli</taxon>
        <taxon>Lactobacillales</taxon>
        <taxon>Streptococcaceae</taxon>
        <taxon>Streptococcus</taxon>
    </lineage>
</organism>
<name>DTD_STRE4</name>
<dbReference type="EC" id="3.1.1.96" evidence="1"/>
<dbReference type="EMBL" id="FM204883">
    <property type="protein sequence ID" value="CAW95285.1"/>
    <property type="molecule type" value="Genomic_DNA"/>
</dbReference>
<dbReference type="RefSeq" id="WP_015898581.1">
    <property type="nucleotide sequence ID" value="NC_012471.1"/>
</dbReference>
<dbReference type="SMR" id="C0M9F6"/>
<dbReference type="KEGG" id="seu:SEQ_2015"/>
<dbReference type="HOGENOM" id="CLU_076901_1_0_9"/>
<dbReference type="OrthoDB" id="9801395at2"/>
<dbReference type="Proteomes" id="UP000001365">
    <property type="component" value="Chromosome"/>
</dbReference>
<dbReference type="GO" id="GO:0005737">
    <property type="term" value="C:cytoplasm"/>
    <property type="evidence" value="ECO:0007669"/>
    <property type="project" value="UniProtKB-SubCell"/>
</dbReference>
<dbReference type="GO" id="GO:0051500">
    <property type="term" value="F:D-tyrosyl-tRNA(Tyr) deacylase activity"/>
    <property type="evidence" value="ECO:0007669"/>
    <property type="project" value="TreeGrafter"/>
</dbReference>
<dbReference type="GO" id="GO:0106026">
    <property type="term" value="F:Gly-tRNA(Ala) deacylase activity"/>
    <property type="evidence" value="ECO:0007669"/>
    <property type="project" value="UniProtKB-UniRule"/>
</dbReference>
<dbReference type="GO" id="GO:0043908">
    <property type="term" value="F:Ser(Gly)-tRNA(Ala) hydrolase activity"/>
    <property type="evidence" value="ECO:0007669"/>
    <property type="project" value="UniProtKB-UniRule"/>
</dbReference>
<dbReference type="GO" id="GO:0000049">
    <property type="term" value="F:tRNA binding"/>
    <property type="evidence" value="ECO:0007669"/>
    <property type="project" value="UniProtKB-UniRule"/>
</dbReference>
<dbReference type="GO" id="GO:0019478">
    <property type="term" value="P:D-amino acid catabolic process"/>
    <property type="evidence" value="ECO:0007669"/>
    <property type="project" value="UniProtKB-UniRule"/>
</dbReference>
<dbReference type="CDD" id="cd00563">
    <property type="entry name" value="Dtyr_deacylase"/>
    <property type="match status" value="1"/>
</dbReference>
<dbReference type="FunFam" id="3.50.80.10:FF:000001">
    <property type="entry name" value="D-aminoacyl-tRNA deacylase"/>
    <property type="match status" value="1"/>
</dbReference>
<dbReference type="Gene3D" id="3.50.80.10">
    <property type="entry name" value="D-tyrosyl-tRNA(Tyr) deacylase"/>
    <property type="match status" value="1"/>
</dbReference>
<dbReference type="HAMAP" id="MF_00518">
    <property type="entry name" value="Deacylase_Dtd"/>
    <property type="match status" value="1"/>
</dbReference>
<dbReference type="InterPro" id="IPR003732">
    <property type="entry name" value="Daa-tRNA_deacyls_DTD"/>
</dbReference>
<dbReference type="InterPro" id="IPR023509">
    <property type="entry name" value="DTD-like_sf"/>
</dbReference>
<dbReference type="NCBIfam" id="TIGR00256">
    <property type="entry name" value="D-aminoacyl-tRNA deacylase"/>
    <property type="match status" value="1"/>
</dbReference>
<dbReference type="PANTHER" id="PTHR10472:SF5">
    <property type="entry name" value="D-AMINOACYL-TRNA DEACYLASE 1"/>
    <property type="match status" value="1"/>
</dbReference>
<dbReference type="PANTHER" id="PTHR10472">
    <property type="entry name" value="D-TYROSYL-TRNA TYR DEACYLASE"/>
    <property type="match status" value="1"/>
</dbReference>
<dbReference type="Pfam" id="PF02580">
    <property type="entry name" value="Tyr_Deacylase"/>
    <property type="match status" value="1"/>
</dbReference>
<dbReference type="SUPFAM" id="SSF69500">
    <property type="entry name" value="DTD-like"/>
    <property type="match status" value="1"/>
</dbReference>
<comment type="function">
    <text evidence="1">An aminoacyl-tRNA editing enzyme that deacylates mischarged D-aminoacyl-tRNAs. Also deacylates mischarged glycyl-tRNA(Ala), protecting cells against glycine mischarging by AlaRS. Acts via tRNA-based rather than protein-based catalysis; rejects L-amino acids rather than detecting D-amino acids in the active site. By recycling D-aminoacyl-tRNA to D-amino acids and free tRNA molecules, this enzyme counteracts the toxicity associated with the formation of D-aminoacyl-tRNA entities in vivo and helps enforce protein L-homochirality.</text>
</comment>
<comment type="catalytic activity">
    <reaction evidence="1">
        <text>glycyl-tRNA(Ala) + H2O = tRNA(Ala) + glycine + H(+)</text>
        <dbReference type="Rhea" id="RHEA:53744"/>
        <dbReference type="Rhea" id="RHEA-COMP:9657"/>
        <dbReference type="Rhea" id="RHEA-COMP:13640"/>
        <dbReference type="ChEBI" id="CHEBI:15377"/>
        <dbReference type="ChEBI" id="CHEBI:15378"/>
        <dbReference type="ChEBI" id="CHEBI:57305"/>
        <dbReference type="ChEBI" id="CHEBI:78442"/>
        <dbReference type="ChEBI" id="CHEBI:78522"/>
        <dbReference type="EC" id="3.1.1.96"/>
    </reaction>
</comment>
<comment type="catalytic activity">
    <reaction evidence="1">
        <text>a D-aminoacyl-tRNA + H2O = a tRNA + a D-alpha-amino acid + H(+)</text>
        <dbReference type="Rhea" id="RHEA:13953"/>
        <dbReference type="Rhea" id="RHEA-COMP:10123"/>
        <dbReference type="Rhea" id="RHEA-COMP:10124"/>
        <dbReference type="ChEBI" id="CHEBI:15377"/>
        <dbReference type="ChEBI" id="CHEBI:15378"/>
        <dbReference type="ChEBI" id="CHEBI:59871"/>
        <dbReference type="ChEBI" id="CHEBI:78442"/>
        <dbReference type="ChEBI" id="CHEBI:79333"/>
        <dbReference type="EC" id="3.1.1.96"/>
    </reaction>
</comment>
<comment type="subunit">
    <text evidence="1">Homodimer.</text>
</comment>
<comment type="subcellular location">
    <subcellularLocation>
        <location evidence="1">Cytoplasm</location>
    </subcellularLocation>
</comment>
<comment type="domain">
    <text evidence="1">A Gly-cisPro motif from one monomer fits into the active site of the other monomer to allow specific chiral rejection of L-amino acids.</text>
</comment>
<comment type="similarity">
    <text evidence="1">Belongs to the DTD family.</text>
</comment>
<keyword id="KW-0963">Cytoplasm</keyword>
<keyword id="KW-0378">Hydrolase</keyword>
<keyword id="KW-0694">RNA-binding</keyword>
<keyword id="KW-0820">tRNA-binding</keyword>
<reference key="1">
    <citation type="journal article" date="2009" name="PLoS Pathog.">
        <title>Genomic evidence for the evolution of Streptococcus equi: host restriction, increased virulence, and genetic exchange with human pathogens.</title>
        <authorList>
            <person name="Holden M.T.G."/>
            <person name="Heather Z."/>
            <person name="Paillot R."/>
            <person name="Steward K.F."/>
            <person name="Webb K."/>
            <person name="Ainslie F."/>
            <person name="Jourdan T."/>
            <person name="Bason N.C."/>
            <person name="Holroyd N.E."/>
            <person name="Mungall K."/>
            <person name="Quail M.A."/>
            <person name="Sanders M."/>
            <person name="Simmonds M."/>
            <person name="Willey D."/>
            <person name="Brooks K."/>
            <person name="Aanensen D.M."/>
            <person name="Spratt B.G."/>
            <person name="Jolley K.A."/>
            <person name="Maiden M.C.J."/>
            <person name="Kehoe M."/>
            <person name="Chanter N."/>
            <person name="Bentley S.D."/>
            <person name="Robinson C."/>
            <person name="Maskell D.J."/>
            <person name="Parkhill J."/>
            <person name="Waller A.S."/>
        </authorList>
    </citation>
    <scope>NUCLEOTIDE SEQUENCE [LARGE SCALE GENOMIC DNA]</scope>
    <source>
        <strain>4047</strain>
    </source>
</reference>